<name>RL18_SHIB3</name>
<reference key="1">
    <citation type="submission" date="2008-05" db="EMBL/GenBank/DDBJ databases">
        <title>Complete sequence of Shigella boydii serotype 18 strain BS512.</title>
        <authorList>
            <person name="Rasko D.A."/>
            <person name="Rosovitz M."/>
            <person name="Maurelli A.T."/>
            <person name="Myers G."/>
            <person name="Seshadri R."/>
            <person name="Cer R."/>
            <person name="Jiang L."/>
            <person name="Ravel J."/>
            <person name="Sebastian Y."/>
        </authorList>
    </citation>
    <scope>NUCLEOTIDE SEQUENCE [LARGE SCALE GENOMIC DNA]</scope>
    <source>
        <strain>CDC 3083-94 / BS512</strain>
    </source>
</reference>
<keyword id="KW-1185">Reference proteome</keyword>
<keyword id="KW-0687">Ribonucleoprotein</keyword>
<keyword id="KW-0689">Ribosomal protein</keyword>
<keyword id="KW-0694">RNA-binding</keyword>
<keyword id="KW-0699">rRNA-binding</keyword>
<accession>B2U2S2</accession>
<feature type="chain" id="PRO_1000142721" description="Large ribosomal subunit protein uL18">
    <location>
        <begin position="1"/>
        <end position="117"/>
    </location>
</feature>
<gene>
    <name evidence="1" type="primary">rplR</name>
    <name type="ordered locus">SbBS512_E3689</name>
</gene>
<organism>
    <name type="scientific">Shigella boydii serotype 18 (strain CDC 3083-94 / BS512)</name>
    <dbReference type="NCBI Taxonomy" id="344609"/>
    <lineage>
        <taxon>Bacteria</taxon>
        <taxon>Pseudomonadati</taxon>
        <taxon>Pseudomonadota</taxon>
        <taxon>Gammaproteobacteria</taxon>
        <taxon>Enterobacterales</taxon>
        <taxon>Enterobacteriaceae</taxon>
        <taxon>Shigella</taxon>
    </lineage>
</organism>
<sequence>MDKKSARIRRATRARRKLQELGATRLVVHRTPRHIYAQVIAPNGSEVLVAASTVEKAIAEQLKYTGNKDAAAAVGKAVAERALEKGIKDVSFDRSGFQYHGRVQALADAAREAGLQF</sequence>
<comment type="function">
    <text evidence="1">This is one of the proteins that bind and probably mediate the attachment of the 5S RNA into the large ribosomal subunit, where it forms part of the central protuberance.</text>
</comment>
<comment type="subunit">
    <text evidence="1">Part of the 50S ribosomal subunit; part of the 5S rRNA/L5/L18/L25 subcomplex. Contacts the 5S and 23S rRNAs.</text>
</comment>
<comment type="similarity">
    <text evidence="1">Belongs to the universal ribosomal protein uL18 family.</text>
</comment>
<proteinExistence type="inferred from homology"/>
<evidence type="ECO:0000255" key="1">
    <source>
        <dbReference type="HAMAP-Rule" id="MF_01337"/>
    </source>
</evidence>
<evidence type="ECO:0000305" key="2"/>
<dbReference type="EMBL" id="CP001063">
    <property type="protein sequence ID" value="ACD09942.1"/>
    <property type="molecule type" value="Genomic_DNA"/>
</dbReference>
<dbReference type="RefSeq" id="WP_000358960.1">
    <property type="nucleotide sequence ID" value="NC_010658.1"/>
</dbReference>
<dbReference type="SMR" id="B2U2S2"/>
<dbReference type="STRING" id="344609.SbBS512_E3689"/>
<dbReference type="GeneID" id="98390426"/>
<dbReference type="KEGG" id="sbc:SbBS512_E3689"/>
<dbReference type="HOGENOM" id="CLU_098841_0_1_6"/>
<dbReference type="Proteomes" id="UP000001030">
    <property type="component" value="Chromosome"/>
</dbReference>
<dbReference type="GO" id="GO:0022625">
    <property type="term" value="C:cytosolic large ribosomal subunit"/>
    <property type="evidence" value="ECO:0007669"/>
    <property type="project" value="TreeGrafter"/>
</dbReference>
<dbReference type="GO" id="GO:0008097">
    <property type="term" value="F:5S rRNA binding"/>
    <property type="evidence" value="ECO:0007669"/>
    <property type="project" value="TreeGrafter"/>
</dbReference>
<dbReference type="GO" id="GO:0003735">
    <property type="term" value="F:structural constituent of ribosome"/>
    <property type="evidence" value="ECO:0007669"/>
    <property type="project" value="InterPro"/>
</dbReference>
<dbReference type="GO" id="GO:0006412">
    <property type="term" value="P:translation"/>
    <property type="evidence" value="ECO:0007669"/>
    <property type="project" value="UniProtKB-UniRule"/>
</dbReference>
<dbReference type="CDD" id="cd00432">
    <property type="entry name" value="Ribosomal_L18_L5e"/>
    <property type="match status" value="1"/>
</dbReference>
<dbReference type="FunFam" id="3.30.420.100:FF:000001">
    <property type="entry name" value="50S ribosomal protein L18"/>
    <property type="match status" value="1"/>
</dbReference>
<dbReference type="Gene3D" id="3.30.420.100">
    <property type="match status" value="1"/>
</dbReference>
<dbReference type="HAMAP" id="MF_01337_B">
    <property type="entry name" value="Ribosomal_uL18_B"/>
    <property type="match status" value="1"/>
</dbReference>
<dbReference type="InterPro" id="IPR004389">
    <property type="entry name" value="Ribosomal_uL18_bac-type"/>
</dbReference>
<dbReference type="InterPro" id="IPR005484">
    <property type="entry name" value="Ribosomal_uL18_bac/euk"/>
</dbReference>
<dbReference type="NCBIfam" id="TIGR00060">
    <property type="entry name" value="L18_bact"/>
    <property type="match status" value="1"/>
</dbReference>
<dbReference type="PANTHER" id="PTHR12899">
    <property type="entry name" value="39S RIBOSOMAL PROTEIN L18, MITOCHONDRIAL"/>
    <property type="match status" value="1"/>
</dbReference>
<dbReference type="PANTHER" id="PTHR12899:SF3">
    <property type="entry name" value="LARGE RIBOSOMAL SUBUNIT PROTEIN UL18M"/>
    <property type="match status" value="1"/>
</dbReference>
<dbReference type="Pfam" id="PF00861">
    <property type="entry name" value="Ribosomal_L18p"/>
    <property type="match status" value="1"/>
</dbReference>
<dbReference type="SUPFAM" id="SSF53137">
    <property type="entry name" value="Translational machinery components"/>
    <property type="match status" value="1"/>
</dbReference>
<protein>
    <recommendedName>
        <fullName evidence="1">Large ribosomal subunit protein uL18</fullName>
    </recommendedName>
    <alternativeName>
        <fullName evidence="2">50S ribosomal protein L18</fullName>
    </alternativeName>
</protein>